<organism>
    <name type="scientific">Photobacterium profundum (strain SS9)</name>
    <dbReference type="NCBI Taxonomy" id="298386"/>
    <lineage>
        <taxon>Bacteria</taxon>
        <taxon>Pseudomonadati</taxon>
        <taxon>Pseudomonadota</taxon>
        <taxon>Gammaproteobacteria</taxon>
        <taxon>Vibrionales</taxon>
        <taxon>Vibrionaceae</taxon>
        <taxon>Photobacterium</taxon>
    </lineage>
</organism>
<comment type="function">
    <text evidence="1">Pyridoxal kinase involved in the salvage pathway of pyridoxal 5'-phosphate (PLP). Catalyzes the phosphorylation of pyridoxal to PLP.</text>
</comment>
<comment type="catalytic activity">
    <reaction evidence="1">
        <text>pyridoxal + ATP = pyridoxal 5'-phosphate + ADP + H(+)</text>
        <dbReference type="Rhea" id="RHEA:10224"/>
        <dbReference type="ChEBI" id="CHEBI:15378"/>
        <dbReference type="ChEBI" id="CHEBI:17310"/>
        <dbReference type="ChEBI" id="CHEBI:30616"/>
        <dbReference type="ChEBI" id="CHEBI:456216"/>
        <dbReference type="ChEBI" id="CHEBI:597326"/>
        <dbReference type="EC" id="2.7.1.35"/>
    </reaction>
</comment>
<comment type="cofactor">
    <cofactor evidence="1">
        <name>Mg(2+)</name>
        <dbReference type="ChEBI" id="CHEBI:18420"/>
    </cofactor>
</comment>
<comment type="pathway">
    <text evidence="1">Cofactor metabolism; pyridoxal 5'-phosphate salvage; pyridoxal 5'-phosphate from pyridoxal: step 1/1.</text>
</comment>
<comment type="subunit">
    <text evidence="1">Homodimer.</text>
</comment>
<comment type="similarity">
    <text evidence="1">Belongs to the pyridoxine kinase family. PdxY subfamily.</text>
</comment>
<protein>
    <recommendedName>
        <fullName evidence="1">Pyridoxal kinase PdxY</fullName>
        <shortName evidence="1">PL kinase</shortName>
        <ecNumber evidence="1">2.7.1.35</ecNumber>
    </recommendedName>
</protein>
<accession>Q6LP62</accession>
<keyword id="KW-0067">ATP-binding</keyword>
<keyword id="KW-0418">Kinase</keyword>
<keyword id="KW-0460">Magnesium</keyword>
<keyword id="KW-0547">Nucleotide-binding</keyword>
<keyword id="KW-1185">Reference proteome</keyword>
<keyword id="KW-0808">Transferase</keyword>
<reference key="1">
    <citation type="journal article" date="2005" name="Science">
        <title>Life at depth: Photobacterium profundum genome sequence and expression analysis.</title>
        <authorList>
            <person name="Vezzi A."/>
            <person name="Campanaro S."/>
            <person name="D'Angelo M."/>
            <person name="Simonato F."/>
            <person name="Vitulo N."/>
            <person name="Lauro F.M."/>
            <person name="Cestaro A."/>
            <person name="Malacrida G."/>
            <person name="Simionati B."/>
            <person name="Cannata N."/>
            <person name="Romualdi C."/>
            <person name="Bartlett D.H."/>
            <person name="Valle G."/>
        </authorList>
    </citation>
    <scope>NUCLEOTIDE SEQUENCE [LARGE SCALE GENOMIC DNA]</scope>
    <source>
        <strain>ATCC BAA-1253 / SS9</strain>
    </source>
</reference>
<name>PDXY_PHOPR</name>
<gene>
    <name evidence="1" type="primary">pdxY</name>
    <name type="ordered locus">PBPRA2534</name>
</gene>
<feature type="chain" id="PRO_0000269816" description="Pyridoxal kinase PdxY">
    <location>
        <begin position="1"/>
        <end position="291"/>
    </location>
</feature>
<feature type="binding site" evidence="1">
    <location>
        <position position="9"/>
    </location>
    <ligand>
        <name>substrate</name>
    </ligand>
</feature>
<feature type="binding site" evidence="1">
    <location>
        <begin position="44"/>
        <end position="45"/>
    </location>
    <ligand>
        <name>substrate</name>
    </ligand>
</feature>
<feature type="binding site" evidence="1">
    <location>
        <position position="112"/>
    </location>
    <ligand>
        <name>ATP</name>
        <dbReference type="ChEBI" id="CHEBI:30616"/>
    </ligand>
</feature>
<feature type="binding site" evidence="1">
    <location>
        <position position="144"/>
    </location>
    <ligand>
        <name>ATP</name>
        <dbReference type="ChEBI" id="CHEBI:30616"/>
    </ligand>
</feature>
<feature type="binding site" evidence="1">
    <location>
        <position position="149"/>
    </location>
    <ligand>
        <name>ATP</name>
        <dbReference type="ChEBI" id="CHEBI:30616"/>
    </ligand>
</feature>
<feature type="binding site" evidence="1">
    <location>
        <position position="182"/>
    </location>
    <ligand>
        <name>ATP</name>
        <dbReference type="ChEBI" id="CHEBI:30616"/>
    </ligand>
</feature>
<feature type="binding site" evidence="1">
    <location>
        <begin position="207"/>
        <end position="210"/>
    </location>
    <ligand>
        <name>ATP</name>
        <dbReference type="ChEBI" id="CHEBI:30616"/>
    </ligand>
</feature>
<feature type="binding site" evidence="1">
    <location>
        <position position="221"/>
    </location>
    <ligand>
        <name>substrate</name>
    </ligand>
</feature>
<dbReference type="EC" id="2.7.1.35" evidence="1"/>
<dbReference type="EMBL" id="CR378671">
    <property type="protein sequence ID" value="CAG20914.1"/>
    <property type="molecule type" value="Genomic_DNA"/>
</dbReference>
<dbReference type="RefSeq" id="WP_011219197.1">
    <property type="nucleotide sequence ID" value="NC_006370.1"/>
</dbReference>
<dbReference type="SMR" id="Q6LP62"/>
<dbReference type="STRING" id="298386.PBPRA2534"/>
<dbReference type="KEGG" id="ppr:PBPRA2534"/>
<dbReference type="eggNOG" id="COG2240">
    <property type="taxonomic scope" value="Bacteria"/>
</dbReference>
<dbReference type="HOGENOM" id="CLU_046496_3_0_6"/>
<dbReference type="UniPathway" id="UPA01068">
    <property type="reaction ID" value="UER00298"/>
</dbReference>
<dbReference type="Proteomes" id="UP000000593">
    <property type="component" value="Chromosome 1"/>
</dbReference>
<dbReference type="GO" id="GO:0005829">
    <property type="term" value="C:cytosol"/>
    <property type="evidence" value="ECO:0007669"/>
    <property type="project" value="TreeGrafter"/>
</dbReference>
<dbReference type="GO" id="GO:0005524">
    <property type="term" value="F:ATP binding"/>
    <property type="evidence" value="ECO:0007669"/>
    <property type="project" value="UniProtKB-UniRule"/>
</dbReference>
<dbReference type="GO" id="GO:0000287">
    <property type="term" value="F:magnesium ion binding"/>
    <property type="evidence" value="ECO:0007669"/>
    <property type="project" value="UniProtKB-UniRule"/>
</dbReference>
<dbReference type="GO" id="GO:0008478">
    <property type="term" value="F:pyridoxal kinase activity"/>
    <property type="evidence" value="ECO:0007669"/>
    <property type="project" value="UniProtKB-UniRule"/>
</dbReference>
<dbReference type="GO" id="GO:0009443">
    <property type="term" value="P:pyridoxal 5'-phosphate salvage"/>
    <property type="evidence" value="ECO:0007669"/>
    <property type="project" value="UniProtKB-UniRule"/>
</dbReference>
<dbReference type="CDD" id="cd01173">
    <property type="entry name" value="pyridoxal_pyridoxamine_kinase"/>
    <property type="match status" value="1"/>
</dbReference>
<dbReference type="Gene3D" id="3.40.1190.20">
    <property type="match status" value="1"/>
</dbReference>
<dbReference type="HAMAP" id="MF_01639">
    <property type="entry name" value="PdxY"/>
    <property type="match status" value="1"/>
</dbReference>
<dbReference type="InterPro" id="IPR013749">
    <property type="entry name" value="PM/HMP-P_kinase-1"/>
</dbReference>
<dbReference type="InterPro" id="IPR004625">
    <property type="entry name" value="PyrdxlKinase"/>
</dbReference>
<dbReference type="InterPro" id="IPR023685">
    <property type="entry name" value="Pyridoxal_kinase_PdxY"/>
</dbReference>
<dbReference type="InterPro" id="IPR029056">
    <property type="entry name" value="Ribokinase-like"/>
</dbReference>
<dbReference type="NCBIfam" id="NF004398">
    <property type="entry name" value="PRK05756.1"/>
    <property type="match status" value="1"/>
</dbReference>
<dbReference type="NCBIfam" id="TIGR00687">
    <property type="entry name" value="pyridox_kin"/>
    <property type="match status" value="1"/>
</dbReference>
<dbReference type="PANTHER" id="PTHR10534">
    <property type="entry name" value="PYRIDOXAL KINASE"/>
    <property type="match status" value="1"/>
</dbReference>
<dbReference type="PANTHER" id="PTHR10534:SF2">
    <property type="entry name" value="PYRIDOXAL KINASE"/>
    <property type="match status" value="1"/>
</dbReference>
<dbReference type="Pfam" id="PF08543">
    <property type="entry name" value="Phos_pyr_kin"/>
    <property type="match status" value="1"/>
</dbReference>
<dbReference type="SUPFAM" id="SSF53613">
    <property type="entry name" value="Ribokinase-like"/>
    <property type="match status" value="1"/>
</dbReference>
<proteinExistence type="inferred from homology"/>
<sequence>MHGILSIQSHVTYGHAGNSSAIFPMQRMGFEVWPIHTVQFSNHTQYKQGWTGRAFSASDIDELVQGLDNIDALKRCKAILTGYQGSAEQCEAIIRTVEKVKAQNPSSLYICDPVMGAPDKGCIVAPGITEYLVDHLMPMADVIVPNQFELSQFAQMEINTLSDAVEACNIALAKGPKVVLVKHLYCVSDDKFSMLLATPEGCFLAQRPHLTFAQQPVGVGDLISSLFTAGLLKGYSTMRAFQHCHDACYGVLKQTHQLNEWELQTILAQNELVEPSETFPIERLNLNLKTA</sequence>
<evidence type="ECO:0000255" key="1">
    <source>
        <dbReference type="HAMAP-Rule" id="MF_01639"/>
    </source>
</evidence>